<proteinExistence type="inferred from homology"/>
<protein>
    <recommendedName>
        <fullName evidence="1">Diaminopimelate epimerase</fullName>
        <shortName evidence="1">DAP epimerase</shortName>
        <ecNumber evidence="1">5.1.1.7</ecNumber>
    </recommendedName>
    <alternativeName>
        <fullName evidence="1">PLP-independent amino acid racemase</fullName>
    </alternativeName>
</protein>
<keyword id="KW-0028">Amino-acid biosynthesis</keyword>
<keyword id="KW-0963">Cytoplasm</keyword>
<keyword id="KW-0413">Isomerase</keyword>
<keyword id="KW-0457">Lysine biosynthesis</keyword>
<dbReference type="EC" id="5.1.1.7" evidence="1"/>
<dbReference type="EMBL" id="CP001175">
    <property type="protein sequence ID" value="ACK38899.1"/>
    <property type="molecule type" value="Genomic_DNA"/>
</dbReference>
<dbReference type="RefSeq" id="WP_012581011.1">
    <property type="nucleotide sequence ID" value="NC_011660.1"/>
</dbReference>
<dbReference type="SMR" id="B8DBR3"/>
<dbReference type="KEGG" id="lmh:LMHCC_0542"/>
<dbReference type="HOGENOM" id="CLU_053306_3_1_9"/>
<dbReference type="UniPathway" id="UPA00034">
    <property type="reaction ID" value="UER00025"/>
</dbReference>
<dbReference type="GO" id="GO:0005829">
    <property type="term" value="C:cytosol"/>
    <property type="evidence" value="ECO:0007669"/>
    <property type="project" value="TreeGrafter"/>
</dbReference>
<dbReference type="GO" id="GO:0008837">
    <property type="term" value="F:diaminopimelate epimerase activity"/>
    <property type="evidence" value="ECO:0007669"/>
    <property type="project" value="UniProtKB-UniRule"/>
</dbReference>
<dbReference type="GO" id="GO:0009089">
    <property type="term" value="P:lysine biosynthetic process via diaminopimelate"/>
    <property type="evidence" value="ECO:0007669"/>
    <property type="project" value="UniProtKB-UniRule"/>
</dbReference>
<dbReference type="Gene3D" id="3.10.310.10">
    <property type="entry name" value="Diaminopimelate Epimerase, Chain A, domain 1"/>
    <property type="match status" value="2"/>
</dbReference>
<dbReference type="HAMAP" id="MF_00197">
    <property type="entry name" value="DAP_epimerase"/>
    <property type="match status" value="1"/>
</dbReference>
<dbReference type="InterPro" id="IPR018510">
    <property type="entry name" value="DAP_epimerase_AS"/>
</dbReference>
<dbReference type="InterPro" id="IPR001653">
    <property type="entry name" value="DAP_epimerase_DapF"/>
</dbReference>
<dbReference type="NCBIfam" id="TIGR00652">
    <property type="entry name" value="DapF"/>
    <property type="match status" value="1"/>
</dbReference>
<dbReference type="PANTHER" id="PTHR31689:SF0">
    <property type="entry name" value="DIAMINOPIMELATE EPIMERASE"/>
    <property type="match status" value="1"/>
</dbReference>
<dbReference type="PANTHER" id="PTHR31689">
    <property type="entry name" value="DIAMINOPIMELATE EPIMERASE, CHLOROPLASTIC"/>
    <property type="match status" value="1"/>
</dbReference>
<dbReference type="Pfam" id="PF01678">
    <property type="entry name" value="DAP_epimerase"/>
    <property type="match status" value="2"/>
</dbReference>
<dbReference type="SUPFAM" id="SSF54506">
    <property type="entry name" value="Diaminopimelate epimerase-like"/>
    <property type="match status" value="2"/>
</dbReference>
<dbReference type="PROSITE" id="PS01326">
    <property type="entry name" value="DAP_EPIMERASE"/>
    <property type="match status" value="1"/>
</dbReference>
<feature type="chain" id="PRO_1000124419" description="Diaminopimelate epimerase">
    <location>
        <begin position="1"/>
        <end position="329"/>
    </location>
</feature>
<feature type="active site" description="Proton donor" evidence="1">
    <location>
        <position position="82"/>
    </location>
</feature>
<feature type="active site" description="Proton acceptor" evidence="1">
    <location>
        <position position="233"/>
    </location>
</feature>
<feature type="binding site" evidence="1">
    <location>
        <position position="14"/>
    </location>
    <ligand>
        <name>substrate</name>
    </ligand>
</feature>
<feature type="binding site" evidence="1">
    <location>
        <position position="73"/>
    </location>
    <ligand>
        <name>substrate</name>
    </ligand>
</feature>
<feature type="binding site" evidence="1">
    <location>
        <begin position="83"/>
        <end position="84"/>
    </location>
    <ligand>
        <name>substrate</name>
    </ligand>
</feature>
<feature type="binding site" evidence="1">
    <location>
        <position position="170"/>
    </location>
    <ligand>
        <name>substrate</name>
    </ligand>
</feature>
<feature type="binding site" evidence="1">
    <location>
        <position position="206"/>
    </location>
    <ligand>
        <name>substrate</name>
    </ligand>
</feature>
<feature type="binding site" evidence="1">
    <location>
        <begin position="224"/>
        <end position="225"/>
    </location>
    <ligand>
        <name>substrate</name>
    </ligand>
</feature>
<feature type="binding site" evidence="1">
    <location>
        <begin position="234"/>
        <end position="235"/>
    </location>
    <ligand>
        <name>substrate</name>
    </ligand>
</feature>
<feature type="site" description="Could be important to modulate the pK values of the two catalytic cysteine residues" evidence="1">
    <location>
        <position position="172"/>
    </location>
</feature>
<feature type="site" description="Could be important to modulate the pK values of the two catalytic cysteine residues" evidence="1">
    <location>
        <position position="224"/>
    </location>
</feature>
<accession>B8DBR3</accession>
<name>DAPF_LISMH</name>
<reference key="1">
    <citation type="journal article" date="2011" name="J. Bacteriol.">
        <title>Genome sequence of lineage III Listeria monocytogenes strain HCC23.</title>
        <authorList>
            <person name="Steele C.L."/>
            <person name="Donaldson J.R."/>
            <person name="Paul D."/>
            <person name="Banes M.M."/>
            <person name="Arick T."/>
            <person name="Bridges S.M."/>
            <person name="Lawrence M.L."/>
        </authorList>
    </citation>
    <scope>NUCLEOTIDE SEQUENCE [LARGE SCALE GENOMIC DNA]</scope>
    <source>
        <strain>HCC23</strain>
    </source>
</reference>
<comment type="function">
    <text evidence="1">Catalyzes the stereoinversion of LL-2,6-diaminopimelate (L,L-DAP) to meso-diaminopimelate (meso-DAP), a precursor of L-lysine and an essential component of the bacterial peptidoglycan.</text>
</comment>
<comment type="catalytic activity">
    <reaction evidence="1">
        <text>(2S,6S)-2,6-diaminopimelate = meso-2,6-diaminopimelate</text>
        <dbReference type="Rhea" id="RHEA:15393"/>
        <dbReference type="ChEBI" id="CHEBI:57609"/>
        <dbReference type="ChEBI" id="CHEBI:57791"/>
        <dbReference type="EC" id="5.1.1.7"/>
    </reaction>
</comment>
<comment type="pathway">
    <text evidence="1">Amino-acid biosynthesis; L-lysine biosynthesis via DAP pathway; DL-2,6-diaminopimelate from LL-2,6-diaminopimelate: step 1/1.</text>
</comment>
<comment type="subunit">
    <text evidence="1">Homodimer.</text>
</comment>
<comment type="subcellular location">
    <subcellularLocation>
        <location evidence="1">Cytoplasm</location>
    </subcellularLocation>
</comment>
<comment type="similarity">
    <text evidence="1">Belongs to the diaminopimelate epimerase family.</text>
</comment>
<organism>
    <name type="scientific">Listeria monocytogenes serotype 4a (strain HCC23)</name>
    <dbReference type="NCBI Taxonomy" id="552536"/>
    <lineage>
        <taxon>Bacteria</taxon>
        <taxon>Bacillati</taxon>
        <taxon>Bacillota</taxon>
        <taxon>Bacilli</taxon>
        <taxon>Bacillales</taxon>
        <taxon>Listeriaceae</taxon>
        <taxon>Listeria</taxon>
    </lineage>
</organism>
<evidence type="ECO:0000255" key="1">
    <source>
        <dbReference type="HAMAP-Rule" id="MF_00197"/>
    </source>
</evidence>
<gene>
    <name evidence="1" type="primary">dapF</name>
    <name type="ordered locus">LMHCC_0542</name>
</gene>
<sequence>MATIHFTKVHGSQNDFFLVDEEENLITEWSDEQRADFAIKLCDRKHSLGGADGILYVTKSSEVGPIGQMRVVNSDGSIASMCGNGLRTVARYLLEKHALTEAKVETMKAILDVKKATSLGFDIPTYQVEISPVKFAAETLPMHVGVEKLFNQVIPELDTELAFSAVSVPNPHLITFVDQSVLDSDKQEKLASYLNSENPYFPDGVNVSFVKRLSDDAIYVRTFERGVGFTNACGTAMSACSLIKKMLDNDTFETPLNVYNDGGRVQVTAKEDAAGEISLQLIGNATFVSKGSVRYENDIVTELTNEATAEQALYQALVKEVKEFLKTTE</sequence>